<gene>
    <name type="primary">copZ</name>
    <name type="ordered locus">SaurJH1_2634</name>
</gene>
<accession>A6U4T9</accession>
<dbReference type="EMBL" id="CP000736">
    <property type="protein sequence ID" value="ABR53457.1"/>
    <property type="molecule type" value="Genomic_DNA"/>
</dbReference>
<dbReference type="SMR" id="A6U4T9"/>
<dbReference type="KEGG" id="sah:SaurJH1_2634"/>
<dbReference type="HOGENOM" id="CLU_134973_10_4_9"/>
<dbReference type="GO" id="GO:0005737">
    <property type="term" value="C:cytoplasm"/>
    <property type="evidence" value="ECO:0007669"/>
    <property type="project" value="UniProtKB-SubCell"/>
</dbReference>
<dbReference type="GO" id="GO:0005507">
    <property type="term" value="F:copper ion binding"/>
    <property type="evidence" value="ECO:0007669"/>
    <property type="project" value="InterPro"/>
</dbReference>
<dbReference type="CDD" id="cd00371">
    <property type="entry name" value="HMA"/>
    <property type="match status" value="1"/>
</dbReference>
<dbReference type="FunFam" id="3.30.70.100:FF:000005">
    <property type="entry name" value="Copper-exporting P-type ATPase A"/>
    <property type="match status" value="1"/>
</dbReference>
<dbReference type="Gene3D" id="3.30.70.100">
    <property type="match status" value="1"/>
</dbReference>
<dbReference type="InterPro" id="IPR049740">
    <property type="entry name" value="CopZ"/>
</dbReference>
<dbReference type="InterPro" id="IPR017969">
    <property type="entry name" value="Heavy-metal-associated_CS"/>
</dbReference>
<dbReference type="InterPro" id="IPR006122">
    <property type="entry name" value="HMA_Cu_ion-bd"/>
</dbReference>
<dbReference type="InterPro" id="IPR006121">
    <property type="entry name" value="HMA_dom"/>
</dbReference>
<dbReference type="InterPro" id="IPR036163">
    <property type="entry name" value="HMA_dom_sf"/>
</dbReference>
<dbReference type="InterPro" id="IPR001802">
    <property type="entry name" value="MerP/CopZ"/>
</dbReference>
<dbReference type="NCBIfam" id="NF033795">
    <property type="entry name" value="chaper_CopZ_Bs"/>
    <property type="match status" value="1"/>
</dbReference>
<dbReference type="NCBIfam" id="TIGR00003">
    <property type="entry name" value="copper ion binding protein"/>
    <property type="match status" value="1"/>
</dbReference>
<dbReference type="PANTHER" id="PTHR46594">
    <property type="entry name" value="P-TYPE CATION-TRANSPORTING ATPASE"/>
    <property type="match status" value="1"/>
</dbReference>
<dbReference type="PANTHER" id="PTHR46594:SF4">
    <property type="entry name" value="P-TYPE CATION-TRANSPORTING ATPASE"/>
    <property type="match status" value="1"/>
</dbReference>
<dbReference type="Pfam" id="PF00403">
    <property type="entry name" value="HMA"/>
    <property type="match status" value="1"/>
</dbReference>
<dbReference type="PRINTS" id="PR00946">
    <property type="entry name" value="HGSCAVENGER"/>
</dbReference>
<dbReference type="SUPFAM" id="SSF55008">
    <property type="entry name" value="HMA, heavy metal-associated domain"/>
    <property type="match status" value="1"/>
</dbReference>
<dbReference type="PROSITE" id="PS01047">
    <property type="entry name" value="HMA_1"/>
    <property type="match status" value="1"/>
</dbReference>
<dbReference type="PROSITE" id="PS50846">
    <property type="entry name" value="HMA_2"/>
    <property type="match status" value="1"/>
</dbReference>
<keyword id="KW-0143">Chaperone</keyword>
<keyword id="KW-0186">Copper</keyword>
<keyword id="KW-0963">Cytoplasm</keyword>
<keyword id="KW-0479">Metal-binding</keyword>
<sequence>MSQEILNVEGMSCGHCKSAVESALNNIDGVTSADVNLENGQVSVQYDDSKVAVSQMKDAIEDQGYDVV</sequence>
<proteinExistence type="inferred from homology"/>
<evidence type="ECO:0000250" key="1"/>
<evidence type="ECO:0000255" key="2">
    <source>
        <dbReference type="PROSITE-ProRule" id="PRU00280"/>
    </source>
</evidence>
<comment type="function">
    <text evidence="1">Chaperone that serves for the intracellular sequestration and transport of Cu(+). Delivers Cu(+) to the copper-exporting P-type ATPase A (CopA) (By similarity).</text>
</comment>
<comment type="subcellular location">
    <subcellularLocation>
        <location evidence="1">Cytoplasm</location>
    </subcellularLocation>
</comment>
<organism>
    <name type="scientific">Staphylococcus aureus (strain JH1)</name>
    <dbReference type="NCBI Taxonomy" id="359787"/>
    <lineage>
        <taxon>Bacteria</taxon>
        <taxon>Bacillati</taxon>
        <taxon>Bacillota</taxon>
        <taxon>Bacilli</taxon>
        <taxon>Bacillales</taxon>
        <taxon>Staphylococcaceae</taxon>
        <taxon>Staphylococcus</taxon>
    </lineage>
</organism>
<reference key="1">
    <citation type="submission" date="2007-06" db="EMBL/GenBank/DDBJ databases">
        <title>Complete sequence of chromosome of Staphylococcus aureus subsp. aureus JH1.</title>
        <authorList>
            <consortium name="US DOE Joint Genome Institute"/>
            <person name="Copeland A."/>
            <person name="Lucas S."/>
            <person name="Lapidus A."/>
            <person name="Barry K."/>
            <person name="Detter J.C."/>
            <person name="Glavina del Rio T."/>
            <person name="Hammon N."/>
            <person name="Israni S."/>
            <person name="Dalin E."/>
            <person name="Tice H."/>
            <person name="Pitluck S."/>
            <person name="Chain P."/>
            <person name="Malfatti S."/>
            <person name="Shin M."/>
            <person name="Vergez L."/>
            <person name="Schmutz J."/>
            <person name="Larimer F."/>
            <person name="Land M."/>
            <person name="Hauser L."/>
            <person name="Kyrpides N."/>
            <person name="Ivanova N."/>
            <person name="Tomasz A."/>
            <person name="Richardson P."/>
        </authorList>
    </citation>
    <scope>NUCLEOTIDE SEQUENCE [LARGE SCALE GENOMIC DNA]</scope>
    <source>
        <strain>JH1</strain>
    </source>
</reference>
<protein>
    <recommendedName>
        <fullName>Copper chaperone CopZ</fullName>
    </recommendedName>
</protein>
<name>COPZ_STAA2</name>
<feature type="chain" id="PRO_0000351272" description="Copper chaperone CopZ">
    <location>
        <begin position="1"/>
        <end position="68"/>
    </location>
</feature>
<feature type="domain" description="HMA" evidence="2">
    <location>
        <begin position="2"/>
        <end position="68"/>
    </location>
</feature>
<feature type="binding site" evidence="2">
    <location>
        <position position="13"/>
    </location>
    <ligand>
        <name>Cu cation</name>
        <dbReference type="ChEBI" id="CHEBI:23378"/>
    </ligand>
</feature>
<feature type="binding site" evidence="2">
    <location>
        <position position="16"/>
    </location>
    <ligand>
        <name>Cu cation</name>
        <dbReference type="ChEBI" id="CHEBI:23378"/>
    </ligand>
</feature>